<proteinExistence type="inferred from homology"/>
<gene>
    <name type="primary">Ly6g6d</name>
</gene>
<organism>
    <name type="scientific">Rattus norvegicus</name>
    <name type="common">Rat</name>
    <dbReference type="NCBI Taxonomy" id="10116"/>
    <lineage>
        <taxon>Eukaryota</taxon>
        <taxon>Metazoa</taxon>
        <taxon>Chordata</taxon>
        <taxon>Craniata</taxon>
        <taxon>Vertebrata</taxon>
        <taxon>Euteleostomi</taxon>
        <taxon>Mammalia</taxon>
        <taxon>Eutheria</taxon>
        <taxon>Euarchontoglires</taxon>
        <taxon>Glires</taxon>
        <taxon>Rodentia</taxon>
        <taxon>Myomorpha</taxon>
        <taxon>Muroidea</taxon>
        <taxon>Muridae</taxon>
        <taxon>Murinae</taxon>
        <taxon>Rattus</taxon>
    </lineage>
</organism>
<accession>Q6MG58</accession>
<reference key="1">
    <citation type="journal article" date="2004" name="Genome Res.">
        <title>The genomic sequence and comparative analysis of the rat major histocompatibility complex.</title>
        <authorList>
            <person name="Hurt P."/>
            <person name="Walter L."/>
            <person name="Sudbrak R."/>
            <person name="Klages S."/>
            <person name="Mueller I."/>
            <person name="Shiina T."/>
            <person name="Inoko H."/>
            <person name="Lehrach H."/>
            <person name="Guenther E."/>
            <person name="Reinhardt R."/>
            <person name="Himmelbauer H."/>
        </authorList>
    </citation>
    <scope>NUCLEOTIDE SEQUENCE [LARGE SCALE GENOMIC DNA]</scope>
    <source>
        <strain>Brown Norway</strain>
    </source>
</reference>
<sequence>MNSQLIGILFSALLGAALGQRMRCYDCGGGPSNSCKQTVITCGEGERCGFLDRKPQPSSEQAKQPSATLSHHYPACVATHHCNQVAIESVGDVTFTTQKNCCFGDLCNGAVASSSTPLCILAAVTTLAWLLSGQ</sequence>
<protein>
    <recommendedName>
        <fullName>Lymphocyte antigen 6 complex locus protein G6d</fullName>
    </recommendedName>
</protein>
<keyword id="KW-1003">Cell membrane</keyword>
<keyword id="KW-1015">Disulfide bond</keyword>
<keyword id="KW-0325">Glycoprotein</keyword>
<keyword id="KW-0336">GPI-anchor</keyword>
<keyword id="KW-0449">Lipoprotein</keyword>
<keyword id="KW-0472">Membrane</keyword>
<keyword id="KW-1185">Reference proteome</keyword>
<keyword id="KW-0732">Signal</keyword>
<name>LY66D_RAT</name>
<evidence type="ECO:0000250" key="1"/>
<evidence type="ECO:0000255" key="2"/>
<comment type="subunit">
    <text evidence="1">Homodimer.</text>
</comment>
<comment type="subcellular location">
    <subcellularLocation>
        <location evidence="1">Cell membrane</location>
        <topology evidence="1">Lipid-anchor</topology>
        <topology evidence="1">GPI-anchor</topology>
    </subcellularLocation>
</comment>
<comment type="PTM">
    <text evidence="1">O-glycosylated.</text>
</comment>
<feature type="signal peptide" evidence="2">
    <location>
        <begin position="1"/>
        <end position="19"/>
    </location>
</feature>
<feature type="chain" id="PRO_0000323711" description="Lymphocyte antigen 6 complex locus protein G6d">
    <location>
        <begin position="20"/>
        <end position="108"/>
    </location>
</feature>
<feature type="propeptide" id="PRO_0000323712" description="Removed in mature form" evidence="2">
    <location>
        <begin position="109"/>
        <end position="134"/>
    </location>
</feature>
<feature type="domain" description="UPAR/Ly6">
    <location>
        <begin position="22"/>
        <end position="121"/>
    </location>
</feature>
<feature type="lipid moiety-binding region" description="GPI-anchor amidated asparagine" evidence="2">
    <location>
        <position position="108"/>
    </location>
</feature>
<feature type="glycosylation site" description="O-linked (GalNAc...) threonine" evidence="2">
    <location>
        <position position="68"/>
    </location>
</feature>
<feature type="disulfide bond" evidence="1">
    <location>
        <begin position="24"/>
        <end position="48"/>
    </location>
</feature>
<feature type="disulfide bond" evidence="1">
    <location>
        <begin position="27"/>
        <end position="35"/>
    </location>
</feature>
<feature type="disulfide bond" evidence="1">
    <location>
        <begin position="42"/>
        <end position="76"/>
    </location>
</feature>
<feature type="disulfide bond" evidence="1">
    <location>
        <begin position="82"/>
        <end position="101"/>
    </location>
</feature>
<feature type="disulfide bond" evidence="1">
    <location>
        <begin position="102"/>
        <end position="107"/>
    </location>
</feature>
<dbReference type="EMBL" id="BX883045">
    <property type="protein sequence ID" value="CAE83988.1"/>
    <property type="molecule type" value="Genomic_DNA"/>
</dbReference>
<dbReference type="RefSeq" id="NP_001001970.1">
    <property type="nucleotide sequence ID" value="NM_001001970.2"/>
</dbReference>
<dbReference type="SMR" id="Q6MG58"/>
<dbReference type="FunCoup" id="Q6MG58">
    <property type="interactions" value="1"/>
</dbReference>
<dbReference type="GlyCosmos" id="Q6MG58">
    <property type="glycosylation" value="1 site, No reported glycans"/>
</dbReference>
<dbReference type="GlyGen" id="Q6MG58">
    <property type="glycosylation" value="1 site"/>
</dbReference>
<dbReference type="PhosphoSitePlus" id="Q6MG58"/>
<dbReference type="PaxDb" id="10116-ENSRNOP00000001120"/>
<dbReference type="Ensembl" id="ENSRNOT00000001120.4">
    <property type="protein sequence ID" value="ENSRNOP00000001120.2"/>
    <property type="gene ID" value="ENSRNOG00000027225.7"/>
</dbReference>
<dbReference type="GeneID" id="415062"/>
<dbReference type="KEGG" id="rno:415062"/>
<dbReference type="UCSC" id="RGD:1303064">
    <property type="organism name" value="rat"/>
</dbReference>
<dbReference type="AGR" id="RGD:1303064"/>
<dbReference type="CTD" id="58530"/>
<dbReference type="RGD" id="1303064">
    <property type="gene designation" value="Ly6g6d"/>
</dbReference>
<dbReference type="eggNOG" id="ENOG502SNF5">
    <property type="taxonomic scope" value="Eukaryota"/>
</dbReference>
<dbReference type="GeneTree" id="ENSGT00390000015960"/>
<dbReference type="HOGENOM" id="CLU_1824727_0_0_1"/>
<dbReference type="InParanoid" id="Q6MG58"/>
<dbReference type="OrthoDB" id="9436841at2759"/>
<dbReference type="PhylomeDB" id="Q6MG58"/>
<dbReference type="Reactome" id="R-RNO-163125">
    <property type="pathway name" value="Post-translational modification: synthesis of GPI-anchored proteins"/>
</dbReference>
<dbReference type="PRO" id="PR:Q6MG58"/>
<dbReference type="Proteomes" id="UP000002494">
    <property type="component" value="Chromosome 20"/>
</dbReference>
<dbReference type="Bgee" id="ENSRNOG00000000844">
    <property type="expression patterns" value="Expressed in cerebellum and 13 other cell types or tissues"/>
</dbReference>
<dbReference type="ExpressionAtlas" id="Q6MG58">
    <property type="expression patterns" value="baseline and differential"/>
</dbReference>
<dbReference type="GO" id="GO:0009897">
    <property type="term" value="C:external side of plasma membrane"/>
    <property type="evidence" value="ECO:0000266"/>
    <property type="project" value="RGD"/>
</dbReference>
<dbReference type="GO" id="GO:0032991">
    <property type="term" value="C:protein-containing complex"/>
    <property type="evidence" value="ECO:0000266"/>
    <property type="project" value="RGD"/>
</dbReference>
<dbReference type="GO" id="GO:0045202">
    <property type="term" value="C:synapse"/>
    <property type="evidence" value="ECO:0007669"/>
    <property type="project" value="GOC"/>
</dbReference>
<dbReference type="GO" id="GO:0030550">
    <property type="term" value="F:acetylcholine receptor inhibitor activity"/>
    <property type="evidence" value="ECO:0000266"/>
    <property type="project" value="RGD"/>
</dbReference>
<dbReference type="GO" id="GO:0042802">
    <property type="term" value="F:identical protein binding"/>
    <property type="evidence" value="ECO:0000266"/>
    <property type="project" value="RGD"/>
</dbReference>
<dbReference type="GO" id="GO:0095500">
    <property type="term" value="P:acetylcholine receptor signaling pathway"/>
    <property type="evidence" value="ECO:0000266"/>
    <property type="project" value="RGD"/>
</dbReference>
<dbReference type="CDD" id="cd23547">
    <property type="entry name" value="TFP_LU_ECD_Ly6G6d"/>
    <property type="match status" value="1"/>
</dbReference>
<dbReference type="FunFam" id="2.10.60.10:FF:000040">
    <property type="entry name" value="Lymphocyte antigen 6 complex locus G6D"/>
    <property type="match status" value="1"/>
</dbReference>
<dbReference type="Gene3D" id="2.10.60.10">
    <property type="entry name" value="CD59"/>
    <property type="match status" value="1"/>
</dbReference>
<dbReference type="InterPro" id="IPR016054">
    <property type="entry name" value="LY6_UPA_recep-like"/>
</dbReference>
<dbReference type="InterPro" id="IPR026524">
    <property type="entry name" value="LY6G6d/LY6G6f"/>
</dbReference>
<dbReference type="InterPro" id="IPR045860">
    <property type="entry name" value="Snake_toxin-like_sf"/>
</dbReference>
<dbReference type="PANTHER" id="PTHR32286:SF9">
    <property type="entry name" value="LYMPHOCYTE ANTIGEN 6 COMPLEX LOCUS PROTEIN G6D"/>
    <property type="match status" value="1"/>
</dbReference>
<dbReference type="PANTHER" id="PTHR32286">
    <property type="entry name" value="LYMPHOCYTE ANTIGEN 6 COMPLEX LOCUS PROTEIN G6F"/>
    <property type="match status" value="1"/>
</dbReference>
<dbReference type="Pfam" id="PF00021">
    <property type="entry name" value="UPAR_LY6"/>
    <property type="match status" value="1"/>
</dbReference>
<dbReference type="SUPFAM" id="SSF57302">
    <property type="entry name" value="Snake toxin-like"/>
    <property type="match status" value="1"/>
</dbReference>